<comment type="function">
    <text evidence="1">The RuvA-RuvB-RuvC complex processes Holliday junction (HJ) DNA during genetic recombination and DNA repair, while the RuvA-RuvB complex plays an important role in the rescue of blocked DNA replication forks via replication fork reversal (RFR). RuvA specifically binds to HJ cruciform DNA, conferring on it an open structure. The RuvB hexamer acts as an ATP-dependent pump, pulling dsDNA into and through the RuvAB complex. RuvB forms 2 homohexamers on either side of HJ DNA bound by 1 or 2 RuvA tetramers; 4 subunits per hexamer contact DNA at a time. Coordinated motions by a converter formed by DNA-disengaged RuvB subunits stimulates ATP hydrolysis and nucleotide exchange. Immobilization of the converter enables RuvB to convert the ATP-contained energy into a lever motion, pulling 2 nucleotides of DNA out of the RuvA tetramer per ATP hydrolyzed, thus driving DNA branch migration. The RuvB motors rotate together with the DNA substrate, which together with the progressing nucleotide cycle form the mechanistic basis for DNA recombination by continuous HJ branch migration. Branch migration allows RuvC to scan DNA until it finds its consensus sequence, where it cleaves and resolves cruciform DNA.</text>
</comment>
<comment type="catalytic activity">
    <reaction evidence="1">
        <text>ATP + H2O = ADP + phosphate + H(+)</text>
        <dbReference type="Rhea" id="RHEA:13065"/>
        <dbReference type="ChEBI" id="CHEBI:15377"/>
        <dbReference type="ChEBI" id="CHEBI:15378"/>
        <dbReference type="ChEBI" id="CHEBI:30616"/>
        <dbReference type="ChEBI" id="CHEBI:43474"/>
        <dbReference type="ChEBI" id="CHEBI:456216"/>
    </reaction>
</comment>
<comment type="subunit">
    <text evidence="1">Homohexamer. Forms an RuvA(8)-RuvB(12)-Holliday junction (HJ) complex. HJ DNA is sandwiched between 2 RuvA tetramers; dsDNA enters through RuvA and exits via RuvB. An RuvB hexamer assembles on each DNA strand where it exits the tetramer. Each RuvB hexamer is contacted by two RuvA subunits (via domain III) on 2 adjacent RuvB subunits; this complex drives branch migration. In the full resolvosome a probable DNA-RuvA(4)-RuvB(12)-RuvC(2) complex forms which resolves the HJ.</text>
</comment>
<comment type="subcellular location">
    <subcellularLocation>
        <location evidence="1">Cytoplasm</location>
    </subcellularLocation>
</comment>
<comment type="domain">
    <text evidence="1">Has 3 domains, the large (RuvB-L) and small ATPase (RuvB-S) domains and the C-terminal head (RuvB-H) domain. The head domain binds DNA, while the ATPase domains jointly bind ATP, ADP or are empty depending on the state of the subunit in the translocation cycle. During a single DNA translocation step the structure of each domain remains the same, but their relative positions change.</text>
</comment>
<comment type="similarity">
    <text evidence="1">Belongs to the RuvB family.</text>
</comment>
<proteinExistence type="inferred from homology"/>
<protein>
    <recommendedName>
        <fullName evidence="1">Holliday junction branch migration complex subunit RuvB</fullName>
        <ecNumber evidence="1">3.6.4.-</ecNumber>
    </recommendedName>
</protein>
<organism>
    <name type="scientific">Francisella philomiragia subsp. philomiragia (strain ATCC 25017 / CCUG 19701 / FSC 153 / O#319-036)</name>
    <dbReference type="NCBI Taxonomy" id="484022"/>
    <lineage>
        <taxon>Bacteria</taxon>
        <taxon>Pseudomonadati</taxon>
        <taxon>Pseudomonadota</taxon>
        <taxon>Gammaproteobacteria</taxon>
        <taxon>Thiotrichales</taxon>
        <taxon>Francisellaceae</taxon>
        <taxon>Francisella</taxon>
    </lineage>
</organism>
<sequence length="348" mass="38684">MIETDRIISANTVQTKDENSIDRAIRPKTLAEYEGQPAVREQMEIFIQAAKSRKDALDHTLIFGPPGLGKTTLSNIIANEMEVELKQTSGPVLEKAGDLAALLTNLEENDVLFIDEIHRLSPVIEEILYPAMEDYQLDIMIGEGPAARSIKIDLPPFTLVGATTRAGLLTSPLRDRFGIIQRLEFYSVDDLAKIVYRSAKLLDLDITDDGANEIAKRSRGTPRIANRLLRRVRDYAQVKASGVISYDIADKALTMLKVDPVGFDHMDHKYLLTLMEKFGGGPVGLDTMAAALSEEKGTIEDVIEPYLIQQGYLMRTARGRIATLLAYNHFKLKIPDSLSSDQQQNLSL</sequence>
<name>RUVB_FRAP2</name>
<dbReference type="EC" id="3.6.4.-" evidence="1"/>
<dbReference type="EMBL" id="CP000937">
    <property type="protein sequence ID" value="ABZ87946.1"/>
    <property type="molecule type" value="Genomic_DNA"/>
</dbReference>
<dbReference type="SMR" id="B0U0B6"/>
<dbReference type="KEGG" id="fph:Fphi_1721"/>
<dbReference type="eggNOG" id="COG2255">
    <property type="taxonomic scope" value="Bacteria"/>
</dbReference>
<dbReference type="HOGENOM" id="CLU_055599_1_0_6"/>
<dbReference type="GO" id="GO:0005737">
    <property type="term" value="C:cytoplasm"/>
    <property type="evidence" value="ECO:0007669"/>
    <property type="project" value="UniProtKB-SubCell"/>
</dbReference>
<dbReference type="GO" id="GO:0048476">
    <property type="term" value="C:Holliday junction resolvase complex"/>
    <property type="evidence" value="ECO:0007669"/>
    <property type="project" value="UniProtKB-UniRule"/>
</dbReference>
<dbReference type="GO" id="GO:0005524">
    <property type="term" value="F:ATP binding"/>
    <property type="evidence" value="ECO:0007669"/>
    <property type="project" value="UniProtKB-UniRule"/>
</dbReference>
<dbReference type="GO" id="GO:0016887">
    <property type="term" value="F:ATP hydrolysis activity"/>
    <property type="evidence" value="ECO:0007669"/>
    <property type="project" value="InterPro"/>
</dbReference>
<dbReference type="GO" id="GO:0000400">
    <property type="term" value="F:four-way junction DNA binding"/>
    <property type="evidence" value="ECO:0007669"/>
    <property type="project" value="UniProtKB-UniRule"/>
</dbReference>
<dbReference type="GO" id="GO:0009378">
    <property type="term" value="F:four-way junction helicase activity"/>
    <property type="evidence" value="ECO:0007669"/>
    <property type="project" value="InterPro"/>
</dbReference>
<dbReference type="GO" id="GO:0006310">
    <property type="term" value="P:DNA recombination"/>
    <property type="evidence" value="ECO:0007669"/>
    <property type="project" value="UniProtKB-UniRule"/>
</dbReference>
<dbReference type="GO" id="GO:0006281">
    <property type="term" value="P:DNA repair"/>
    <property type="evidence" value="ECO:0007669"/>
    <property type="project" value="UniProtKB-UniRule"/>
</dbReference>
<dbReference type="CDD" id="cd00009">
    <property type="entry name" value="AAA"/>
    <property type="match status" value="1"/>
</dbReference>
<dbReference type="FunFam" id="1.10.8.60:FF:000023">
    <property type="entry name" value="Holliday junction ATP-dependent DNA helicase RuvB"/>
    <property type="match status" value="1"/>
</dbReference>
<dbReference type="FunFam" id="3.40.50.300:FF:000073">
    <property type="entry name" value="Holliday junction ATP-dependent DNA helicase RuvB"/>
    <property type="match status" value="1"/>
</dbReference>
<dbReference type="Gene3D" id="1.10.8.60">
    <property type="match status" value="1"/>
</dbReference>
<dbReference type="Gene3D" id="3.40.50.300">
    <property type="entry name" value="P-loop containing nucleotide triphosphate hydrolases"/>
    <property type="match status" value="1"/>
</dbReference>
<dbReference type="Gene3D" id="1.10.10.10">
    <property type="entry name" value="Winged helix-like DNA-binding domain superfamily/Winged helix DNA-binding domain"/>
    <property type="match status" value="1"/>
</dbReference>
<dbReference type="HAMAP" id="MF_00016">
    <property type="entry name" value="DNA_HJ_migration_RuvB"/>
    <property type="match status" value="1"/>
</dbReference>
<dbReference type="InterPro" id="IPR003593">
    <property type="entry name" value="AAA+_ATPase"/>
</dbReference>
<dbReference type="InterPro" id="IPR041445">
    <property type="entry name" value="AAA_lid_4"/>
</dbReference>
<dbReference type="InterPro" id="IPR004605">
    <property type="entry name" value="DNA_helicase_Holl-junc_RuvB"/>
</dbReference>
<dbReference type="InterPro" id="IPR027417">
    <property type="entry name" value="P-loop_NTPase"/>
</dbReference>
<dbReference type="InterPro" id="IPR008824">
    <property type="entry name" value="RuvB-like_N"/>
</dbReference>
<dbReference type="InterPro" id="IPR008823">
    <property type="entry name" value="RuvB_C"/>
</dbReference>
<dbReference type="InterPro" id="IPR036388">
    <property type="entry name" value="WH-like_DNA-bd_sf"/>
</dbReference>
<dbReference type="InterPro" id="IPR036390">
    <property type="entry name" value="WH_DNA-bd_sf"/>
</dbReference>
<dbReference type="NCBIfam" id="NF000868">
    <property type="entry name" value="PRK00080.1"/>
    <property type="match status" value="1"/>
</dbReference>
<dbReference type="NCBIfam" id="TIGR00635">
    <property type="entry name" value="ruvB"/>
    <property type="match status" value="1"/>
</dbReference>
<dbReference type="PANTHER" id="PTHR42848">
    <property type="match status" value="1"/>
</dbReference>
<dbReference type="PANTHER" id="PTHR42848:SF1">
    <property type="entry name" value="HOLLIDAY JUNCTION BRANCH MIGRATION COMPLEX SUBUNIT RUVB"/>
    <property type="match status" value="1"/>
</dbReference>
<dbReference type="Pfam" id="PF17864">
    <property type="entry name" value="AAA_lid_4"/>
    <property type="match status" value="1"/>
</dbReference>
<dbReference type="Pfam" id="PF05491">
    <property type="entry name" value="RuvB_C"/>
    <property type="match status" value="1"/>
</dbReference>
<dbReference type="Pfam" id="PF05496">
    <property type="entry name" value="RuvB_N"/>
    <property type="match status" value="1"/>
</dbReference>
<dbReference type="SMART" id="SM00382">
    <property type="entry name" value="AAA"/>
    <property type="match status" value="1"/>
</dbReference>
<dbReference type="SUPFAM" id="SSF52540">
    <property type="entry name" value="P-loop containing nucleoside triphosphate hydrolases"/>
    <property type="match status" value="1"/>
</dbReference>
<dbReference type="SUPFAM" id="SSF46785">
    <property type="entry name" value="Winged helix' DNA-binding domain"/>
    <property type="match status" value="1"/>
</dbReference>
<feature type="chain" id="PRO_1000074085" description="Holliday junction branch migration complex subunit RuvB">
    <location>
        <begin position="1"/>
        <end position="348"/>
    </location>
</feature>
<feature type="region of interest" description="Large ATPase domain (RuvB-L)" evidence="1">
    <location>
        <begin position="4"/>
        <end position="186"/>
    </location>
</feature>
<feature type="region of interest" description="Small ATPAse domain (RuvB-S)" evidence="1">
    <location>
        <begin position="187"/>
        <end position="257"/>
    </location>
</feature>
<feature type="region of interest" description="Head domain (RuvB-H)" evidence="1">
    <location>
        <begin position="260"/>
        <end position="348"/>
    </location>
</feature>
<feature type="binding site" evidence="1">
    <location>
        <position position="25"/>
    </location>
    <ligand>
        <name>ATP</name>
        <dbReference type="ChEBI" id="CHEBI:30616"/>
    </ligand>
</feature>
<feature type="binding site" evidence="1">
    <location>
        <position position="26"/>
    </location>
    <ligand>
        <name>ATP</name>
        <dbReference type="ChEBI" id="CHEBI:30616"/>
    </ligand>
</feature>
<feature type="binding site" evidence="1">
    <location>
        <position position="67"/>
    </location>
    <ligand>
        <name>ATP</name>
        <dbReference type="ChEBI" id="CHEBI:30616"/>
    </ligand>
</feature>
<feature type="binding site" evidence="1">
    <location>
        <position position="70"/>
    </location>
    <ligand>
        <name>ATP</name>
        <dbReference type="ChEBI" id="CHEBI:30616"/>
    </ligand>
</feature>
<feature type="binding site" evidence="1">
    <location>
        <position position="71"/>
    </location>
    <ligand>
        <name>ATP</name>
        <dbReference type="ChEBI" id="CHEBI:30616"/>
    </ligand>
</feature>
<feature type="binding site" evidence="1">
    <location>
        <position position="71"/>
    </location>
    <ligand>
        <name>Mg(2+)</name>
        <dbReference type="ChEBI" id="CHEBI:18420"/>
    </ligand>
</feature>
<feature type="binding site" evidence="1">
    <location>
        <position position="72"/>
    </location>
    <ligand>
        <name>ATP</name>
        <dbReference type="ChEBI" id="CHEBI:30616"/>
    </ligand>
</feature>
<feature type="binding site" evidence="1">
    <location>
        <begin position="133"/>
        <end position="135"/>
    </location>
    <ligand>
        <name>ATP</name>
        <dbReference type="ChEBI" id="CHEBI:30616"/>
    </ligand>
</feature>
<feature type="binding site" evidence="1">
    <location>
        <position position="176"/>
    </location>
    <ligand>
        <name>ATP</name>
        <dbReference type="ChEBI" id="CHEBI:30616"/>
    </ligand>
</feature>
<feature type="binding site" evidence="1">
    <location>
        <position position="186"/>
    </location>
    <ligand>
        <name>ATP</name>
        <dbReference type="ChEBI" id="CHEBI:30616"/>
    </ligand>
</feature>
<feature type="binding site" evidence="1">
    <location>
        <position position="223"/>
    </location>
    <ligand>
        <name>ATP</name>
        <dbReference type="ChEBI" id="CHEBI:30616"/>
    </ligand>
</feature>
<feature type="binding site" evidence="1">
    <location>
        <position position="315"/>
    </location>
    <ligand>
        <name>DNA</name>
        <dbReference type="ChEBI" id="CHEBI:16991"/>
    </ligand>
</feature>
<feature type="binding site" evidence="1">
    <location>
        <position position="320"/>
    </location>
    <ligand>
        <name>DNA</name>
        <dbReference type="ChEBI" id="CHEBI:16991"/>
    </ligand>
</feature>
<gene>
    <name evidence="1" type="primary">ruvB</name>
    <name type="ordered locus">Fphi_1721</name>
</gene>
<keyword id="KW-0067">ATP-binding</keyword>
<keyword id="KW-0963">Cytoplasm</keyword>
<keyword id="KW-0227">DNA damage</keyword>
<keyword id="KW-0233">DNA recombination</keyword>
<keyword id="KW-0234">DNA repair</keyword>
<keyword id="KW-0238">DNA-binding</keyword>
<keyword id="KW-0378">Hydrolase</keyword>
<keyword id="KW-0547">Nucleotide-binding</keyword>
<accession>B0U0B6</accession>
<evidence type="ECO:0000255" key="1">
    <source>
        <dbReference type="HAMAP-Rule" id="MF_00016"/>
    </source>
</evidence>
<reference key="1">
    <citation type="submission" date="2007-12" db="EMBL/GenBank/DDBJ databases">
        <title>Complete sequence of chromosome of Francisella philomiragia subsp. philomiragia ATCC 25017.</title>
        <authorList>
            <consortium name="US DOE Joint Genome Institute"/>
            <person name="Copeland A."/>
            <person name="Lucas S."/>
            <person name="Lapidus A."/>
            <person name="Barry K."/>
            <person name="Detter J.C."/>
            <person name="Glavina del Rio T."/>
            <person name="Hammon N."/>
            <person name="Israni S."/>
            <person name="Dalin E."/>
            <person name="Tice H."/>
            <person name="Pitluck S."/>
            <person name="Chain P."/>
            <person name="Malfatti S."/>
            <person name="Shin M."/>
            <person name="Vergez L."/>
            <person name="Schmutz J."/>
            <person name="Larimer F."/>
            <person name="Land M."/>
            <person name="Hauser L."/>
            <person name="Richardson P."/>
        </authorList>
    </citation>
    <scope>NUCLEOTIDE SEQUENCE [LARGE SCALE GENOMIC DNA]</scope>
    <source>
        <strain>ATCC 25017 / CCUG 19701 / FSC 153 / O#319-036</strain>
    </source>
</reference>